<organism>
    <name type="scientific">Salmonella dublin (strain CT_02021853)</name>
    <dbReference type="NCBI Taxonomy" id="439851"/>
    <lineage>
        <taxon>Bacteria</taxon>
        <taxon>Pseudomonadati</taxon>
        <taxon>Pseudomonadota</taxon>
        <taxon>Gammaproteobacteria</taxon>
        <taxon>Enterobacterales</taxon>
        <taxon>Enterobacteriaceae</taxon>
        <taxon>Salmonella</taxon>
    </lineage>
</organism>
<comment type="function">
    <text evidence="1">Catalyzes the transfer of the gamma-phosphate of ATP to D-galactose to form alpha-D-galactose-1-phosphate (Gal-1-P).</text>
</comment>
<comment type="catalytic activity">
    <reaction evidence="1">
        <text>alpha-D-galactose + ATP = alpha-D-galactose 1-phosphate + ADP + H(+)</text>
        <dbReference type="Rhea" id="RHEA:13553"/>
        <dbReference type="ChEBI" id="CHEBI:15378"/>
        <dbReference type="ChEBI" id="CHEBI:28061"/>
        <dbReference type="ChEBI" id="CHEBI:30616"/>
        <dbReference type="ChEBI" id="CHEBI:58336"/>
        <dbReference type="ChEBI" id="CHEBI:456216"/>
        <dbReference type="EC" id="2.7.1.6"/>
    </reaction>
</comment>
<comment type="pathway">
    <text evidence="1">Carbohydrate metabolism; galactose metabolism.</text>
</comment>
<comment type="subcellular location">
    <subcellularLocation>
        <location evidence="1">Cytoplasm</location>
    </subcellularLocation>
</comment>
<comment type="similarity">
    <text evidence="1">Belongs to the GHMP kinase family. GalK subfamily.</text>
</comment>
<gene>
    <name evidence="1" type="primary">galK</name>
    <name type="ordered locus">SeD_A0869</name>
</gene>
<evidence type="ECO:0000255" key="1">
    <source>
        <dbReference type="HAMAP-Rule" id="MF_00246"/>
    </source>
</evidence>
<name>GAL1_SALDC</name>
<accession>B5FP41</accession>
<dbReference type="EC" id="2.7.1.6" evidence="1"/>
<dbReference type="EMBL" id="CP001144">
    <property type="protein sequence ID" value="ACH77684.1"/>
    <property type="molecule type" value="Genomic_DNA"/>
</dbReference>
<dbReference type="RefSeq" id="WP_001049364.1">
    <property type="nucleotide sequence ID" value="NC_011205.1"/>
</dbReference>
<dbReference type="SMR" id="B5FP41"/>
<dbReference type="KEGG" id="sed:SeD_A0869"/>
<dbReference type="HOGENOM" id="CLU_017814_2_1_6"/>
<dbReference type="UniPathway" id="UPA00214"/>
<dbReference type="Proteomes" id="UP000008322">
    <property type="component" value="Chromosome"/>
</dbReference>
<dbReference type="GO" id="GO:0005829">
    <property type="term" value="C:cytosol"/>
    <property type="evidence" value="ECO:0007669"/>
    <property type="project" value="TreeGrafter"/>
</dbReference>
<dbReference type="GO" id="GO:0005524">
    <property type="term" value="F:ATP binding"/>
    <property type="evidence" value="ECO:0007669"/>
    <property type="project" value="UniProtKB-UniRule"/>
</dbReference>
<dbReference type="GO" id="GO:0004335">
    <property type="term" value="F:galactokinase activity"/>
    <property type="evidence" value="ECO:0007669"/>
    <property type="project" value="UniProtKB-UniRule"/>
</dbReference>
<dbReference type="GO" id="GO:0000287">
    <property type="term" value="F:magnesium ion binding"/>
    <property type="evidence" value="ECO:0007669"/>
    <property type="project" value="UniProtKB-UniRule"/>
</dbReference>
<dbReference type="GO" id="GO:0006012">
    <property type="term" value="P:galactose metabolic process"/>
    <property type="evidence" value="ECO:0007669"/>
    <property type="project" value="UniProtKB-UniRule"/>
</dbReference>
<dbReference type="FunFam" id="3.30.230.10:FF:000017">
    <property type="entry name" value="Galactokinase"/>
    <property type="match status" value="1"/>
</dbReference>
<dbReference type="FunFam" id="3.30.70.890:FF:000001">
    <property type="entry name" value="Galactokinase"/>
    <property type="match status" value="1"/>
</dbReference>
<dbReference type="Gene3D" id="3.30.230.10">
    <property type="match status" value="1"/>
</dbReference>
<dbReference type="Gene3D" id="3.30.70.890">
    <property type="entry name" value="GHMP kinase, C-terminal domain"/>
    <property type="match status" value="1"/>
</dbReference>
<dbReference type="HAMAP" id="MF_00246">
    <property type="entry name" value="Galactokinase"/>
    <property type="match status" value="1"/>
</dbReference>
<dbReference type="InterPro" id="IPR000705">
    <property type="entry name" value="Galactokinase"/>
</dbReference>
<dbReference type="InterPro" id="IPR022963">
    <property type="entry name" value="Galactokinase_bac"/>
</dbReference>
<dbReference type="InterPro" id="IPR019741">
    <property type="entry name" value="Galactokinase_CS"/>
</dbReference>
<dbReference type="InterPro" id="IPR019539">
    <property type="entry name" value="GalKase_N"/>
</dbReference>
<dbReference type="InterPro" id="IPR013750">
    <property type="entry name" value="GHMP_kinase_C_dom"/>
</dbReference>
<dbReference type="InterPro" id="IPR036554">
    <property type="entry name" value="GHMP_kinase_C_sf"/>
</dbReference>
<dbReference type="InterPro" id="IPR006204">
    <property type="entry name" value="GHMP_kinase_N_dom"/>
</dbReference>
<dbReference type="InterPro" id="IPR006203">
    <property type="entry name" value="GHMP_knse_ATP-bd_CS"/>
</dbReference>
<dbReference type="InterPro" id="IPR006206">
    <property type="entry name" value="Mevalonate/galactokinase"/>
</dbReference>
<dbReference type="InterPro" id="IPR020568">
    <property type="entry name" value="Ribosomal_Su5_D2-typ_SF"/>
</dbReference>
<dbReference type="InterPro" id="IPR014721">
    <property type="entry name" value="Ribsml_uS5_D2-typ_fold_subgr"/>
</dbReference>
<dbReference type="NCBIfam" id="TIGR00131">
    <property type="entry name" value="gal_kin"/>
    <property type="match status" value="1"/>
</dbReference>
<dbReference type="NCBIfam" id="NF003472">
    <property type="entry name" value="PRK05101.1"/>
    <property type="match status" value="1"/>
</dbReference>
<dbReference type="PANTHER" id="PTHR10457:SF7">
    <property type="entry name" value="GALACTOKINASE-RELATED"/>
    <property type="match status" value="1"/>
</dbReference>
<dbReference type="PANTHER" id="PTHR10457">
    <property type="entry name" value="MEVALONATE KINASE/GALACTOKINASE"/>
    <property type="match status" value="1"/>
</dbReference>
<dbReference type="Pfam" id="PF10509">
    <property type="entry name" value="GalKase_gal_bdg"/>
    <property type="match status" value="1"/>
</dbReference>
<dbReference type="Pfam" id="PF08544">
    <property type="entry name" value="GHMP_kinases_C"/>
    <property type="match status" value="1"/>
</dbReference>
<dbReference type="Pfam" id="PF00288">
    <property type="entry name" value="GHMP_kinases_N"/>
    <property type="match status" value="1"/>
</dbReference>
<dbReference type="PIRSF" id="PIRSF000530">
    <property type="entry name" value="Galactokinase"/>
    <property type="match status" value="1"/>
</dbReference>
<dbReference type="PRINTS" id="PR00473">
    <property type="entry name" value="GALCTOKINASE"/>
</dbReference>
<dbReference type="PRINTS" id="PR00959">
    <property type="entry name" value="MEVGALKINASE"/>
</dbReference>
<dbReference type="SUPFAM" id="SSF55060">
    <property type="entry name" value="GHMP Kinase, C-terminal domain"/>
    <property type="match status" value="1"/>
</dbReference>
<dbReference type="SUPFAM" id="SSF54211">
    <property type="entry name" value="Ribosomal protein S5 domain 2-like"/>
    <property type="match status" value="1"/>
</dbReference>
<dbReference type="PROSITE" id="PS00106">
    <property type="entry name" value="GALACTOKINASE"/>
    <property type="match status" value="1"/>
</dbReference>
<dbReference type="PROSITE" id="PS00627">
    <property type="entry name" value="GHMP_KINASES_ATP"/>
    <property type="match status" value="1"/>
</dbReference>
<reference key="1">
    <citation type="journal article" date="2011" name="J. Bacteriol.">
        <title>Comparative genomics of 28 Salmonella enterica isolates: evidence for CRISPR-mediated adaptive sublineage evolution.</title>
        <authorList>
            <person name="Fricke W.F."/>
            <person name="Mammel M.K."/>
            <person name="McDermott P.F."/>
            <person name="Tartera C."/>
            <person name="White D.G."/>
            <person name="Leclerc J.E."/>
            <person name="Ravel J."/>
            <person name="Cebula T.A."/>
        </authorList>
    </citation>
    <scope>NUCLEOTIDE SEQUENCE [LARGE SCALE GENOMIC DNA]</scope>
    <source>
        <strain>CT_02021853</strain>
    </source>
</reference>
<keyword id="KW-0067">ATP-binding</keyword>
<keyword id="KW-0119">Carbohydrate metabolism</keyword>
<keyword id="KW-0963">Cytoplasm</keyword>
<keyword id="KW-0299">Galactose metabolism</keyword>
<keyword id="KW-0418">Kinase</keyword>
<keyword id="KW-0460">Magnesium</keyword>
<keyword id="KW-0479">Metal-binding</keyword>
<keyword id="KW-0547">Nucleotide-binding</keyword>
<keyword id="KW-0808">Transferase</keyword>
<feature type="chain" id="PRO_1000100839" description="Galactokinase">
    <location>
        <begin position="1"/>
        <end position="382"/>
    </location>
</feature>
<feature type="active site" description="Proton acceptor" evidence="1">
    <location>
        <position position="174"/>
    </location>
</feature>
<feature type="binding site" evidence="1">
    <location>
        <begin position="34"/>
        <end position="37"/>
    </location>
    <ligand>
        <name>substrate</name>
    </ligand>
</feature>
<feature type="binding site" evidence="1">
    <location>
        <begin position="124"/>
        <end position="130"/>
    </location>
    <ligand>
        <name>ATP</name>
        <dbReference type="ChEBI" id="CHEBI:30616"/>
    </ligand>
</feature>
<feature type="binding site" evidence="1">
    <location>
        <position position="130"/>
    </location>
    <ligand>
        <name>Mg(2+)</name>
        <dbReference type="ChEBI" id="CHEBI:18420"/>
    </ligand>
</feature>
<feature type="binding site" evidence="1">
    <location>
        <position position="162"/>
    </location>
    <ligand>
        <name>Mg(2+)</name>
        <dbReference type="ChEBI" id="CHEBI:18420"/>
    </ligand>
</feature>
<feature type="binding site" evidence="1">
    <location>
        <position position="223"/>
    </location>
    <ligand>
        <name>substrate</name>
    </ligand>
</feature>
<feature type="site" description="Transition state stabilizer" evidence="1">
    <location>
        <position position="28"/>
    </location>
</feature>
<proteinExistence type="inferred from homology"/>
<protein>
    <recommendedName>
        <fullName evidence="1">Galactokinase</fullName>
        <ecNumber evidence="1">2.7.1.6</ecNumber>
    </recommendedName>
    <alternativeName>
        <fullName evidence="1">Galactose kinase</fullName>
    </alternativeName>
</protein>
<sequence length="382" mass="41246">MNLKEKTRALFAEIFGYPATHTIQAPGRVNLIGEHTDYNDGFVLPCAIDYQTVISCAPRDDRTVRVIAADYDNQVDEFSLDAPIVTHDSQQWSNYVRGVVKHLQQRNNAFGGVDMVISGNVPQGAGLSSSASLEVAVGTVFQQLYHLPLDGAQIALNGQEAENQFVGCNCGIMDQLISALGKKDHALLIDCRTLGAKAVSMPKGVAVVIINSNFKRTLVGSEYNTRREQCETGARFFQQPALRDVSLEAFNAVASELDPVVAKRVRHVLSENARTVEAASALEKGDLQRMGQLMAESHASMRDDFEITVPQIDTLVDIVKATIGDQGGVRMTGGGFGGCVVALIPEDLVPAVQQAVAQQYEAKTGIKETFYVCKPSQGAGQC</sequence>